<organism>
    <name type="scientific">Escherichia coli (strain K12)</name>
    <dbReference type="NCBI Taxonomy" id="83333"/>
    <lineage>
        <taxon>Bacteria</taxon>
        <taxon>Pseudomonadati</taxon>
        <taxon>Pseudomonadota</taxon>
        <taxon>Gammaproteobacteria</taxon>
        <taxon>Enterobacterales</taxon>
        <taxon>Enterobacteriaceae</taxon>
        <taxon>Escherichia</taxon>
    </lineage>
</organism>
<feature type="initiator methionine" description="Removed" evidence="3">
    <location>
        <position position="1"/>
    </location>
</feature>
<feature type="chain" id="PRO_0000199896" description="Sulfite reductase [NADPH] hemoprotein beta-component">
    <location>
        <begin position="2"/>
        <end position="570"/>
    </location>
</feature>
<feature type="binding site" evidence="2 4">
    <location>
        <position position="434"/>
    </location>
    <ligand>
        <name>[4Fe-4S] cluster</name>
        <dbReference type="ChEBI" id="CHEBI:49883"/>
    </ligand>
</feature>
<feature type="binding site" evidence="2 4">
    <location>
        <position position="440"/>
    </location>
    <ligand>
        <name>[4Fe-4S] cluster</name>
        <dbReference type="ChEBI" id="CHEBI:49883"/>
    </ligand>
</feature>
<feature type="binding site" evidence="2 4">
    <location>
        <position position="479"/>
    </location>
    <ligand>
        <name>[4Fe-4S] cluster</name>
        <dbReference type="ChEBI" id="CHEBI:49883"/>
    </ligand>
</feature>
<feature type="binding site" evidence="2 4">
    <location>
        <position position="483"/>
    </location>
    <ligand>
        <name>[4Fe-4S] cluster</name>
        <dbReference type="ChEBI" id="CHEBI:49883"/>
    </ligand>
</feature>
<feature type="binding site" description="axial binding residue" evidence="2 4">
    <location>
        <position position="483"/>
    </location>
    <ligand>
        <name>siroheme</name>
        <dbReference type="ChEBI" id="CHEBI:60052"/>
    </ligand>
    <ligandPart>
        <name>Fe</name>
        <dbReference type="ChEBI" id="CHEBI:18248"/>
    </ligandPart>
</feature>
<feature type="sequence conflict" description="In Ref. 1; AAA23651." evidence="5" ref="1">
    <original>H</original>
    <variation>L</variation>
    <location>
        <position position="23"/>
    </location>
</feature>
<feature type="strand" evidence="10">
    <location>
        <begin position="81"/>
        <end position="83"/>
    </location>
</feature>
<feature type="helix" evidence="10">
    <location>
        <begin position="87"/>
        <end position="89"/>
    </location>
</feature>
<feature type="strand" evidence="10">
    <location>
        <begin position="90"/>
        <end position="92"/>
    </location>
</feature>
<feature type="helix" evidence="10">
    <location>
        <begin position="93"/>
        <end position="106"/>
    </location>
</feature>
<feature type="strand" evidence="7">
    <location>
        <begin position="107"/>
        <end position="109"/>
    </location>
</feature>
<feature type="strand" evidence="10">
    <location>
        <begin position="112"/>
        <end position="114"/>
    </location>
</feature>
<feature type="strand" evidence="10">
    <location>
        <begin position="120"/>
        <end position="123"/>
    </location>
</feature>
<feature type="helix" evidence="10">
    <location>
        <begin position="127"/>
        <end position="129"/>
    </location>
</feature>
<feature type="helix" evidence="10">
    <location>
        <begin position="130"/>
        <end position="139"/>
    </location>
</feature>
<feature type="strand" evidence="8">
    <location>
        <begin position="143"/>
        <end position="145"/>
    </location>
</feature>
<feature type="turn" evidence="10">
    <location>
        <begin position="148"/>
        <end position="150"/>
    </location>
</feature>
<feature type="helix" evidence="10">
    <location>
        <begin position="164"/>
        <end position="166"/>
    </location>
</feature>
<feature type="helix" evidence="10">
    <location>
        <begin position="167"/>
        <end position="180"/>
    </location>
</feature>
<feature type="turn" evidence="6">
    <location>
        <begin position="205"/>
        <end position="207"/>
    </location>
</feature>
<feature type="strand" evidence="10">
    <location>
        <begin position="218"/>
        <end position="221"/>
    </location>
</feature>
<feature type="helix" evidence="10">
    <location>
        <begin position="230"/>
        <end position="232"/>
    </location>
</feature>
<feature type="strand" evidence="10">
    <location>
        <begin position="233"/>
        <end position="242"/>
    </location>
</feature>
<feature type="strand" evidence="10">
    <location>
        <begin position="245"/>
        <end position="253"/>
    </location>
</feature>
<feature type="strand" evidence="10">
    <location>
        <begin position="272"/>
        <end position="278"/>
    </location>
</feature>
<feature type="helix" evidence="10">
    <location>
        <begin position="279"/>
        <end position="281"/>
    </location>
</feature>
<feature type="helix" evidence="10">
    <location>
        <begin position="282"/>
        <end position="296"/>
    </location>
</feature>
<feature type="helix" evidence="10">
    <location>
        <begin position="302"/>
        <end position="304"/>
    </location>
</feature>
<feature type="helix" evidence="10">
    <location>
        <begin position="307"/>
        <end position="314"/>
    </location>
</feature>
<feature type="helix" evidence="10">
    <location>
        <begin position="316"/>
        <end position="327"/>
    </location>
</feature>
<feature type="strand" evidence="10">
    <location>
        <begin position="347"/>
        <end position="350"/>
    </location>
</feature>
<feature type="strand" evidence="8">
    <location>
        <begin position="352"/>
        <end position="354"/>
    </location>
</feature>
<feature type="strand" evidence="10">
    <location>
        <begin position="355"/>
        <end position="360"/>
    </location>
</feature>
<feature type="helix" evidence="10">
    <location>
        <begin position="363"/>
        <end position="365"/>
    </location>
</feature>
<feature type="helix" evidence="10">
    <location>
        <begin position="375"/>
        <end position="385"/>
    </location>
</feature>
<feature type="strand" evidence="10">
    <location>
        <begin position="387"/>
        <end position="392"/>
    </location>
</feature>
<feature type="strand" evidence="10">
    <location>
        <begin position="398"/>
        <end position="404"/>
    </location>
</feature>
<feature type="helix" evidence="10">
    <location>
        <begin position="405"/>
        <end position="407"/>
    </location>
</feature>
<feature type="helix" evidence="10">
    <location>
        <begin position="408"/>
        <end position="417"/>
    </location>
</feature>
<feature type="turn" evidence="10">
    <location>
        <begin position="418"/>
        <end position="421"/>
    </location>
</feature>
<feature type="helix" evidence="10">
    <location>
        <begin position="426"/>
        <end position="429"/>
    </location>
</feature>
<feature type="strand" evidence="10">
    <location>
        <begin position="431"/>
        <end position="433"/>
    </location>
</feature>
<feature type="turn" evidence="10">
    <location>
        <begin position="437"/>
        <end position="439"/>
    </location>
</feature>
<feature type="turn" evidence="10">
    <location>
        <begin position="448"/>
        <end position="450"/>
    </location>
</feature>
<feature type="helix" evidence="10">
    <location>
        <begin position="451"/>
        <end position="464"/>
    </location>
</feature>
<feature type="strand" evidence="10">
    <location>
        <begin position="474"/>
        <end position="479"/>
    </location>
</feature>
<feature type="helix" evidence="10">
    <location>
        <begin position="486"/>
        <end position="488"/>
    </location>
</feature>
<feature type="strand" evidence="10">
    <location>
        <begin position="489"/>
        <end position="497"/>
    </location>
</feature>
<feature type="strand" evidence="10">
    <location>
        <begin position="500"/>
        <end position="505"/>
    </location>
</feature>
<feature type="strand" evidence="9">
    <location>
        <begin position="509"/>
        <end position="511"/>
    </location>
</feature>
<feature type="strand" evidence="10">
    <location>
        <begin position="516"/>
        <end position="523"/>
    </location>
</feature>
<feature type="helix" evidence="10">
    <location>
        <begin position="524"/>
        <end position="541"/>
    </location>
</feature>
<feature type="helix" evidence="10">
    <location>
        <begin position="548"/>
        <end position="554"/>
    </location>
</feature>
<feature type="helix" evidence="10">
    <location>
        <begin position="564"/>
        <end position="567"/>
    </location>
</feature>
<accession>P17846</accession>
<accession>Q2MA66</accession>
<dbReference type="EC" id="1.8.1.2" evidence="1"/>
<dbReference type="EMBL" id="M23008">
    <property type="protein sequence ID" value="AAA23651.1"/>
    <property type="status" value="ALT_INIT"/>
    <property type="molecule type" value="Genomic_DNA"/>
</dbReference>
<dbReference type="EMBL" id="U29579">
    <property type="protein sequence ID" value="AAA69273.1"/>
    <property type="molecule type" value="Genomic_DNA"/>
</dbReference>
<dbReference type="EMBL" id="U00096">
    <property type="protein sequence ID" value="AAC75805.1"/>
    <property type="molecule type" value="Genomic_DNA"/>
</dbReference>
<dbReference type="EMBL" id="AP009048">
    <property type="protein sequence ID" value="BAE76840.1"/>
    <property type="molecule type" value="Genomic_DNA"/>
</dbReference>
<dbReference type="EMBL" id="Y07525">
    <property type="protein sequence ID" value="CAA68816.1"/>
    <property type="status" value="ALT_INIT"/>
    <property type="molecule type" value="Genomic_DNA"/>
</dbReference>
<dbReference type="PIR" id="G65057">
    <property type="entry name" value="RDECSH"/>
</dbReference>
<dbReference type="RefSeq" id="NP_417243.1">
    <property type="nucleotide sequence ID" value="NC_000913.3"/>
</dbReference>
<dbReference type="RefSeq" id="WP_001290679.1">
    <property type="nucleotide sequence ID" value="NZ_LN832404.1"/>
</dbReference>
<dbReference type="PDB" id="1AOP">
    <property type="method" value="X-ray"/>
    <property type="resolution" value="1.60 A"/>
    <property type="chains" value="A=74-570"/>
</dbReference>
<dbReference type="PDB" id="2AOP">
    <property type="method" value="X-ray"/>
    <property type="resolution" value="1.75 A"/>
    <property type="chains" value="A=74-570"/>
</dbReference>
<dbReference type="PDB" id="2GEP">
    <property type="method" value="X-ray"/>
    <property type="resolution" value="1.90 A"/>
    <property type="chains" value="A=74-570"/>
</dbReference>
<dbReference type="PDB" id="3AOP">
    <property type="method" value="X-ray"/>
    <property type="resolution" value="2.10 A"/>
    <property type="chains" value="A=74-570"/>
</dbReference>
<dbReference type="PDB" id="3GEO">
    <property type="method" value="X-ray"/>
    <property type="resolution" value="2.10 A"/>
    <property type="chains" value="A=74-570"/>
</dbReference>
<dbReference type="PDB" id="4AOP">
    <property type="method" value="X-ray"/>
    <property type="resolution" value="1.80 A"/>
    <property type="chains" value="A=74-570"/>
</dbReference>
<dbReference type="PDB" id="4G38">
    <property type="method" value="X-ray"/>
    <property type="resolution" value="1.56 A"/>
    <property type="chains" value="A=1-570"/>
</dbReference>
<dbReference type="PDB" id="4G39">
    <property type="method" value="X-ray"/>
    <property type="resolution" value="2.40 A"/>
    <property type="chains" value="A=1-570"/>
</dbReference>
<dbReference type="PDB" id="4GEP">
    <property type="method" value="X-ray"/>
    <property type="resolution" value="2.00 A"/>
    <property type="chains" value="A=74-570"/>
</dbReference>
<dbReference type="PDB" id="4HTR">
    <property type="method" value="X-ray"/>
    <property type="resolution" value="1.60 A"/>
    <property type="chains" value="A=64-570"/>
</dbReference>
<dbReference type="PDB" id="5AOP">
    <property type="method" value="X-ray"/>
    <property type="resolution" value="2.20 A"/>
    <property type="chains" value="A=74-570"/>
</dbReference>
<dbReference type="PDB" id="5GEP">
    <property type="method" value="X-ray"/>
    <property type="resolution" value="2.10 A"/>
    <property type="chains" value="A=74-570"/>
</dbReference>
<dbReference type="PDB" id="6C3M">
    <property type="method" value="X-ray"/>
    <property type="resolution" value="1.50 A"/>
    <property type="chains" value="A=1-570"/>
</dbReference>
<dbReference type="PDB" id="6C3X">
    <property type="method" value="X-ray"/>
    <property type="resolution" value="1.54 A"/>
    <property type="chains" value="A=1-570"/>
</dbReference>
<dbReference type="PDB" id="6C3Y">
    <property type="method" value="X-ray"/>
    <property type="resolution" value="1.54 A"/>
    <property type="chains" value="A=1-570"/>
</dbReference>
<dbReference type="PDB" id="6C3Z">
    <property type="method" value="X-ray"/>
    <property type="resolution" value="1.68 A"/>
    <property type="chains" value="A=1-570"/>
</dbReference>
<dbReference type="PDB" id="6GEP">
    <property type="method" value="X-ray"/>
    <property type="resolution" value="1.80 A"/>
    <property type="chains" value="A=74-570"/>
</dbReference>
<dbReference type="PDB" id="7GEP">
    <property type="method" value="X-ray"/>
    <property type="resolution" value="2.40 A"/>
    <property type="chains" value="A=74-570"/>
</dbReference>
<dbReference type="PDB" id="8GEP">
    <property type="method" value="X-ray"/>
    <property type="resolution" value="2.20 A"/>
    <property type="chains" value="A=74-570"/>
</dbReference>
<dbReference type="PDBsum" id="1AOP"/>
<dbReference type="PDBsum" id="2AOP"/>
<dbReference type="PDBsum" id="2GEP"/>
<dbReference type="PDBsum" id="3AOP"/>
<dbReference type="PDBsum" id="3GEO"/>
<dbReference type="PDBsum" id="4AOP"/>
<dbReference type="PDBsum" id="4G38"/>
<dbReference type="PDBsum" id="4G39"/>
<dbReference type="PDBsum" id="4GEP"/>
<dbReference type="PDBsum" id="4HTR"/>
<dbReference type="PDBsum" id="5AOP"/>
<dbReference type="PDBsum" id="5GEP"/>
<dbReference type="PDBsum" id="6C3M"/>
<dbReference type="PDBsum" id="6C3X"/>
<dbReference type="PDBsum" id="6C3Y"/>
<dbReference type="PDBsum" id="6C3Z"/>
<dbReference type="PDBsum" id="6GEP"/>
<dbReference type="PDBsum" id="7GEP"/>
<dbReference type="PDBsum" id="8GEP"/>
<dbReference type="SASBDB" id="P17846"/>
<dbReference type="SMR" id="P17846"/>
<dbReference type="BioGRID" id="4262276">
    <property type="interactions" value="173"/>
</dbReference>
<dbReference type="ComplexPortal" id="CPX-5629">
    <property type="entry name" value="Sulfite reductase [NADPH] complex"/>
</dbReference>
<dbReference type="DIP" id="DIP-9380N"/>
<dbReference type="FunCoup" id="P17846">
    <property type="interactions" value="322"/>
</dbReference>
<dbReference type="IntAct" id="P17846">
    <property type="interactions" value="11"/>
</dbReference>
<dbReference type="STRING" id="511145.b2763"/>
<dbReference type="DrugBank" id="DB02832">
    <property type="generic name" value="Siroheme"/>
</dbReference>
<dbReference type="jPOST" id="P17846"/>
<dbReference type="PaxDb" id="511145-b2763"/>
<dbReference type="EnsemblBacteria" id="AAC75805">
    <property type="protein sequence ID" value="AAC75805"/>
    <property type="gene ID" value="b2763"/>
</dbReference>
<dbReference type="GeneID" id="947231"/>
<dbReference type="KEGG" id="ecj:JW2733"/>
<dbReference type="KEGG" id="eco:b2763"/>
<dbReference type="KEGG" id="ecoc:C3026_15185"/>
<dbReference type="PATRIC" id="fig|1411691.4.peg.3974"/>
<dbReference type="EchoBASE" id="EB0187"/>
<dbReference type="eggNOG" id="COG0155">
    <property type="taxonomic scope" value="Bacteria"/>
</dbReference>
<dbReference type="HOGENOM" id="CLU_001975_3_2_6"/>
<dbReference type="InParanoid" id="P17846"/>
<dbReference type="OMA" id="IKISGCM"/>
<dbReference type="OrthoDB" id="3189055at2"/>
<dbReference type="PhylomeDB" id="P17846"/>
<dbReference type="BioCyc" id="EcoCyc:BETACOMP-MONOMER"/>
<dbReference type="BioCyc" id="MetaCyc:BETACOMP-MONOMER"/>
<dbReference type="BRENDA" id="1.8.1.2">
    <property type="organism ID" value="2026"/>
</dbReference>
<dbReference type="UniPathway" id="UPA00140">
    <property type="reaction ID" value="UER00207"/>
</dbReference>
<dbReference type="EvolutionaryTrace" id="P17846"/>
<dbReference type="PRO" id="PR:P17846"/>
<dbReference type="Proteomes" id="UP000000625">
    <property type="component" value="Chromosome"/>
</dbReference>
<dbReference type="GO" id="GO:0009337">
    <property type="term" value="C:sulfite reductase complex (NADPH)"/>
    <property type="evidence" value="ECO:0000314"/>
    <property type="project" value="EcoCyc"/>
</dbReference>
<dbReference type="GO" id="GO:0051539">
    <property type="term" value="F:4 iron, 4 sulfur cluster binding"/>
    <property type="evidence" value="ECO:0000314"/>
    <property type="project" value="EcoCyc"/>
</dbReference>
<dbReference type="GO" id="GO:0020037">
    <property type="term" value="F:heme binding"/>
    <property type="evidence" value="ECO:0000314"/>
    <property type="project" value="EcoCyc"/>
</dbReference>
<dbReference type="GO" id="GO:0046872">
    <property type="term" value="F:metal ion binding"/>
    <property type="evidence" value="ECO:0007669"/>
    <property type="project" value="UniProtKB-KW"/>
</dbReference>
<dbReference type="GO" id="GO:0050661">
    <property type="term" value="F:NADP binding"/>
    <property type="evidence" value="ECO:0007669"/>
    <property type="project" value="InterPro"/>
</dbReference>
<dbReference type="GO" id="GO:0004783">
    <property type="term" value="F:sulfite reductase (NADPH) activity"/>
    <property type="evidence" value="ECO:0007669"/>
    <property type="project" value="UniProtKB-UniRule"/>
</dbReference>
<dbReference type="GO" id="GO:0019344">
    <property type="term" value="P:cysteine biosynthetic process"/>
    <property type="evidence" value="ECO:0000303"/>
    <property type="project" value="ComplexPortal"/>
</dbReference>
<dbReference type="GO" id="GO:0070814">
    <property type="term" value="P:hydrogen sulfide biosynthetic process"/>
    <property type="evidence" value="ECO:0007669"/>
    <property type="project" value="UniProtKB-UniRule"/>
</dbReference>
<dbReference type="GO" id="GO:0000103">
    <property type="term" value="P:sulfate assimilation"/>
    <property type="evidence" value="ECO:0000314"/>
    <property type="project" value="ComplexPortal"/>
</dbReference>
<dbReference type="FunFam" id="3.30.413.10:FF:000003">
    <property type="entry name" value="Sulfite reductase [NADPH] hemoprotein beta-component"/>
    <property type="match status" value="1"/>
</dbReference>
<dbReference type="FunFam" id="3.30.413.10:FF:000004">
    <property type="entry name" value="Sulfite reductase [NADPH] hemoprotein beta-component"/>
    <property type="match status" value="1"/>
</dbReference>
<dbReference type="Gene3D" id="3.30.413.10">
    <property type="entry name" value="Sulfite Reductase Hemoprotein, domain 1"/>
    <property type="match status" value="2"/>
</dbReference>
<dbReference type="HAMAP" id="MF_01540">
    <property type="entry name" value="CysI"/>
    <property type="match status" value="1"/>
</dbReference>
<dbReference type="InterPro" id="IPR011786">
    <property type="entry name" value="CysI"/>
</dbReference>
<dbReference type="InterPro" id="IPR005117">
    <property type="entry name" value="NiRdtase/SiRdtase_haem-b_fer"/>
</dbReference>
<dbReference type="InterPro" id="IPR036136">
    <property type="entry name" value="Nit/Sulf_reduc_fer-like_dom_sf"/>
</dbReference>
<dbReference type="InterPro" id="IPR006067">
    <property type="entry name" value="NO2/SO3_Rdtase_4Fe4S_dom"/>
</dbReference>
<dbReference type="InterPro" id="IPR045169">
    <property type="entry name" value="NO2/SO3_Rdtase_4Fe4S_prot"/>
</dbReference>
<dbReference type="InterPro" id="IPR045854">
    <property type="entry name" value="NO2/SO3_Rdtase_4Fe4S_sf"/>
</dbReference>
<dbReference type="InterPro" id="IPR006066">
    <property type="entry name" value="NO2/SO3_Rdtase_FeS/sirohaem_BS"/>
</dbReference>
<dbReference type="NCBIfam" id="TIGR02041">
    <property type="entry name" value="CysI"/>
    <property type="match status" value="1"/>
</dbReference>
<dbReference type="NCBIfam" id="NF010029">
    <property type="entry name" value="PRK13504.1"/>
    <property type="match status" value="1"/>
</dbReference>
<dbReference type="PANTHER" id="PTHR11493:SF47">
    <property type="entry name" value="SULFITE REDUCTASE [NADPH] SUBUNIT BETA"/>
    <property type="match status" value="1"/>
</dbReference>
<dbReference type="PANTHER" id="PTHR11493">
    <property type="entry name" value="SULFITE REDUCTASE [NADPH] SUBUNIT BETA-RELATED"/>
    <property type="match status" value="1"/>
</dbReference>
<dbReference type="Pfam" id="PF01077">
    <property type="entry name" value="NIR_SIR"/>
    <property type="match status" value="1"/>
</dbReference>
<dbReference type="Pfam" id="PF03460">
    <property type="entry name" value="NIR_SIR_ferr"/>
    <property type="match status" value="2"/>
</dbReference>
<dbReference type="PRINTS" id="PR00397">
    <property type="entry name" value="SIROHAEM"/>
</dbReference>
<dbReference type="SUPFAM" id="SSF56014">
    <property type="entry name" value="Nitrite and sulphite reductase 4Fe-4S domain-like"/>
    <property type="match status" value="2"/>
</dbReference>
<dbReference type="SUPFAM" id="SSF55124">
    <property type="entry name" value="Nitrite/Sulfite reductase N-terminal domain-like"/>
    <property type="match status" value="2"/>
</dbReference>
<dbReference type="PROSITE" id="PS00365">
    <property type="entry name" value="NIR_SIR"/>
    <property type="match status" value="1"/>
</dbReference>
<proteinExistence type="evidence at protein level"/>
<sequence>MSEKHPGPLVVEGKLTDAERMKHESNYLRGTIAEDLNDGLTGGFKGDNFLLIRFHGMYQQDDRDIRAERAEQKLEPRHAMLLRCRLPGGVITTKQWQAIDKFAGENTIYGSIRLTNRQTFQFHGILKKNVKPVHQMLHSVGLDALATANDMNRNVLCTSNPYESQLHAEAYEWAKKISEHLLPRTRAYAEIWLDQEKVATTDEEPILGQTYLPRKFKTTVVIPPQNDIDLHANDMNFVAIAENGKLVGFNLLVGGGLSIEHGNKKTYARTASEFGYLPLEHTLAVAEAVVTTQRDWGNRTDRKNAKTKYTLERVGVETFKAEVERRAGIKFEPIRPYEFTGRGDRIGWVKGIDDNWHLTLFIENGRILDYPARPLKTGLLEIAKIHKGDFRITANQNLIIAGVPESEKAKIEKIAKESGLMNAVTPQRENSMACVSFPTCPLAMAEAERFLPSFIDNIDNLMAKHGVSDEHIVMRVTGCPNGCGRAMLAEVGLVGKAPGRYNLHLGGNRIGTRIPRMYKENITEPEILASLDELIGRWAKEREAGEGFGDFTVRAGIIRPVLDPARDLWD</sequence>
<evidence type="ECO:0000255" key="1">
    <source>
        <dbReference type="HAMAP-Rule" id="MF_01540"/>
    </source>
</evidence>
<evidence type="ECO:0000269" key="2">
    <source>
    </source>
</evidence>
<evidence type="ECO:0000269" key="3">
    <source>
    </source>
</evidence>
<evidence type="ECO:0000269" key="4">
    <source>
    </source>
</evidence>
<evidence type="ECO:0000305" key="5"/>
<evidence type="ECO:0007829" key="6">
    <source>
        <dbReference type="PDB" id="2GEP"/>
    </source>
</evidence>
<evidence type="ECO:0007829" key="7">
    <source>
        <dbReference type="PDB" id="4G38"/>
    </source>
</evidence>
<evidence type="ECO:0007829" key="8">
    <source>
        <dbReference type="PDB" id="4G39"/>
    </source>
</evidence>
<evidence type="ECO:0007829" key="9">
    <source>
        <dbReference type="PDB" id="4GEP"/>
    </source>
</evidence>
<evidence type="ECO:0007829" key="10">
    <source>
        <dbReference type="PDB" id="6C3M"/>
    </source>
</evidence>
<comment type="function">
    <text evidence="1">Component of the sulfite reductase complex that catalyzes the 6-electron reduction of sulfite to sulfide. This is one of several activities required for the biosynthesis of L-cysteine from sulfate.</text>
</comment>
<comment type="catalytic activity">
    <reaction evidence="1">
        <text>hydrogen sulfide + 3 NADP(+) + 3 H2O = sulfite + 3 NADPH + 4 H(+)</text>
        <dbReference type="Rhea" id="RHEA:13801"/>
        <dbReference type="ChEBI" id="CHEBI:15377"/>
        <dbReference type="ChEBI" id="CHEBI:15378"/>
        <dbReference type="ChEBI" id="CHEBI:17359"/>
        <dbReference type="ChEBI" id="CHEBI:29919"/>
        <dbReference type="ChEBI" id="CHEBI:57783"/>
        <dbReference type="ChEBI" id="CHEBI:58349"/>
        <dbReference type="EC" id="1.8.1.2"/>
    </reaction>
</comment>
<comment type="cofactor">
    <cofactor evidence="1 2 4">
        <name>siroheme</name>
        <dbReference type="ChEBI" id="CHEBI:60052"/>
    </cofactor>
    <text evidence="1 2 4">Binds 1 siroheme per subunit.</text>
</comment>
<comment type="cofactor">
    <cofactor evidence="1 2 4">
        <name>[4Fe-4S] cluster</name>
        <dbReference type="ChEBI" id="CHEBI:49883"/>
    </cofactor>
    <text evidence="1 2 4">Binds 1 [4Fe-4S] cluster per subunit.</text>
</comment>
<comment type="pathway">
    <text evidence="1">Sulfur metabolism; hydrogen sulfide biosynthesis; hydrogen sulfide from sulfite (NADPH route): step 1/1.</text>
</comment>
<comment type="subunit">
    <text evidence="1">Alpha(8)-beta(8). The alpha component is a flavoprotein, the beta component is a hemoprotein.</text>
</comment>
<comment type="similarity">
    <text evidence="5">Belongs to the nitrite and sulfite reductase 4Fe-4S domain family.</text>
</comment>
<comment type="sequence caution" evidence="5">
    <conflict type="erroneous initiation">
        <sequence resource="EMBL-CDS" id="AAA23651"/>
    </conflict>
</comment>
<comment type="sequence caution" evidence="5">
    <conflict type="erroneous initiation">
        <sequence resource="EMBL-CDS" id="CAA68816"/>
    </conflict>
</comment>
<keyword id="KW-0002">3D-structure</keyword>
<keyword id="KW-0004">4Fe-4S</keyword>
<keyword id="KW-0028">Amino-acid biosynthesis</keyword>
<keyword id="KW-0198">Cysteine biosynthesis</keyword>
<keyword id="KW-0903">Direct protein sequencing</keyword>
<keyword id="KW-0349">Heme</keyword>
<keyword id="KW-0408">Iron</keyword>
<keyword id="KW-0411">Iron-sulfur</keyword>
<keyword id="KW-0479">Metal-binding</keyword>
<keyword id="KW-0521">NADP</keyword>
<keyword id="KW-0560">Oxidoreductase</keyword>
<keyword id="KW-1185">Reference proteome</keyword>
<reference key="1">
    <citation type="journal article" date="1989" name="J. Biol. Chem.">
        <title>Characterization of the cysJIH regions of Salmonella typhimurium and Escherichia coli B. DNA sequences of cysI and cysH and a model for the siroheme-Fe4S4 active center of sulfite reductase hemoprotein based on amino acid homology with spinach nitrite reductase.</title>
        <authorList>
            <person name="Ostrowski J."/>
            <person name="Wu J.-Y."/>
            <person name="Rueger D.C."/>
            <person name="Miller B.E."/>
            <person name="Siegel L.M."/>
            <person name="Kredich N.M."/>
        </authorList>
    </citation>
    <scope>NUCLEOTIDE SEQUENCE [GENOMIC DNA]</scope>
    <scope>PARTIAL PROTEIN SEQUENCE</scope>
    <source>
        <strain>B</strain>
    </source>
</reference>
<reference key="2">
    <citation type="journal article" date="1997" name="Science">
        <title>The complete genome sequence of Escherichia coli K-12.</title>
        <authorList>
            <person name="Blattner F.R."/>
            <person name="Plunkett G. III"/>
            <person name="Bloch C.A."/>
            <person name="Perna N.T."/>
            <person name="Burland V."/>
            <person name="Riley M."/>
            <person name="Collado-Vides J."/>
            <person name="Glasner J.D."/>
            <person name="Rode C.K."/>
            <person name="Mayhew G.F."/>
            <person name="Gregor J."/>
            <person name="Davis N.W."/>
            <person name="Kirkpatrick H.A."/>
            <person name="Goeden M.A."/>
            <person name="Rose D.J."/>
            <person name="Mau B."/>
            <person name="Shao Y."/>
        </authorList>
    </citation>
    <scope>NUCLEOTIDE SEQUENCE [LARGE SCALE GENOMIC DNA]</scope>
    <source>
        <strain>K12 / MG1655 / ATCC 47076</strain>
    </source>
</reference>
<reference key="3">
    <citation type="journal article" date="2006" name="Mol. Syst. Biol.">
        <title>Highly accurate genome sequences of Escherichia coli K-12 strains MG1655 and W3110.</title>
        <authorList>
            <person name="Hayashi K."/>
            <person name="Morooka N."/>
            <person name="Yamamoto Y."/>
            <person name="Fujita K."/>
            <person name="Isono K."/>
            <person name="Choi S."/>
            <person name="Ohtsubo E."/>
            <person name="Baba T."/>
            <person name="Wanner B.L."/>
            <person name="Mori H."/>
            <person name="Horiuchi T."/>
        </authorList>
    </citation>
    <scope>NUCLEOTIDE SEQUENCE [LARGE SCALE GENOMIC DNA]</scope>
    <source>
        <strain>K12 / W3110 / ATCC 27325 / DSM 5911</strain>
    </source>
</reference>
<reference key="4">
    <citation type="journal article" date="1991" name="Mol. Gen. Genet.">
        <title>Characterisation of the gene cysH and of its product phospho-adenylylsulphate reductase from Escherichia coli.</title>
        <authorList>
            <person name="Krone F.A."/>
            <person name="Westphal G."/>
            <person name="Schwenn J.D."/>
        </authorList>
    </citation>
    <scope>NUCLEOTIDE SEQUENCE [GENOMIC DNA] OF 344-570</scope>
    <source>
        <strain>K12</strain>
    </source>
</reference>
<reference key="5">
    <citation type="journal article" date="1997" name="Electrophoresis">
        <title>Comparing the predicted and observed properties of proteins encoded in the genome of Escherichia coli K-12.</title>
        <authorList>
            <person name="Link A.J."/>
            <person name="Robison K."/>
            <person name="Church G.M."/>
        </authorList>
    </citation>
    <scope>PROTEIN SEQUENCE OF 2-13</scope>
    <source>
        <strain>K12 / EMG2</strain>
    </source>
</reference>
<reference key="6">
    <citation type="journal article" date="1995" name="Science">
        <title>Sulfite reductase structure at 1.6 A: evolution and catalysis for reduction of inorganic anions.</title>
        <authorList>
            <person name="Crane B.R."/>
            <person name="Siegel L.M."/>
            <person name="Getzoff E.D."/>
        </authorList>
    </citation>
    <scope>X-RAY CRYSTALLOGRAPHY (1.6 ANGSTROMS) OF 74-570 IN COMPLEX WITH HEME AND IRON-SULFUR (4FE-4S)</scope>
    <scope>COFACTOR</scope>
</reference>
<reference key="7">
    <citation type="journal article" date="1997" name="Biochemistry">
        <title>Structures of the siroheme- and Fe4S4-containing active center of sulfite reductase in different states of oxidation: heme activation via reduction-gated exogenous ligand exchange.</title>
        <authorList>
            <person name="Crane B.R."/>
            <person name="Siegel L.M."/>
            <person name="Getzoff E.D."/>
        </authorList>
    </citation>
    <scope>X-RAY CRYSTALLOGRAPHY (1.75 ANGSTROMS) OF 74-570 IN COMPLEX WITH HEME AND IRON-SULFUR (4FE-4S)</scope>
    <scope>COFACTOR</scope>
</reference>
<protein>
    <recommendedName>
        <fullName evidence="1">Sulfite reductase [NADPH] hemoprotein beta-component</fullName>
        <shortName evidence="1">SiR-HP</shortName>
        <shortName evidence="1">SiRHP</shortName>
        <ecNumber evidence="1">1.8.1.2</ecNumber>
    </recommendedName>
</protein>
<gene>
    <name type="primary">cysI</name>
    <name type="ordered locus">b2763</name>
    <name type="ordered locus">JW2733</name>
</gene>
<name>CYSI_ECOLI</name>